<gene>
    <name evidence="6" type="primary">IQCJ</name>
</gene>
<comment type="alternative products">
    <event type="alternative splicing"/>
    <isoform>
        <id>Q1A5X6-1</id>
        <name>IQCJ-1</name>
        <sequence type="displayed"/>
    </isoform>
    <isoform>
        <id>Q1A5X6-2</id>
        <name>IQCJ-2</name>
        <sequence type="described" ref="VSP_030597"/>
    </isoform>
    <isoform>
        <id>Q1A5X6-3</id>
        <name>IQCJ-3</name>
        <sequence type="described" ref="VSP_043259"/>
    </isoform>
    <isoform>
        <id>B3KU38-1</id>
        <name>IQCJ-SCHIP1-1</name>
        <sequence type="external"/>
    </isoform>
    <isoform>
        <id>B3KU38-2</id>
        <name>IQCJ-SCHIP1-2</name>
        <sequence type="external"/>
    </isoform>
</comment>
<keyword id="KW-0025">Alternative splicing</keyword>
<keyword id="KW-1185">Reference proteome</keyword>
<reference key="1">
    <citation type="journal article" date="2006" name="Biochem. Biophys. Res. Commun.">
        <title>IQCJ-SCHIP1, a novel fusion transcript encoding a calmodulin-binding IQ motif protein.</title>
        <authorList>
            <person name="Kwasnicka-Crawford D.A."/>
            <person name="Carson A.R."/>
            <person name="Scherer S.W."/>
        </authorList>
    </citation>
    <scope>NUCLEOTIDE SEQUENCE [MRNA] (ISOFORMS IQCJ-1 AND IQCJ-2)</scope>
    <scope>ALTERNATIVE SPLICING</scope>
</reference>
<reference key="2">
    <citation type="journal article" date="2006" name="Nature">
        <title>The DNA sequence, annotation and analysis of human chromosome 3.</title>
        <authorList>
            <person name="Muzny D.M."/>
            <person name="Scherer S.E."/>
            <person name="Kaul R."/>
            <person name="Wang J."/>
            <person name="Yu J."/>
            <person name="Sudbrak R."/>
            <person name="Buhay C.J."/>
            <person name="Chen R."/>
            <person name="Cree A."/>
            <person name="Ding Y."/>
            <person name="Dugan-Rocha S."/>
            <person name="Gill R."/>
            <person name="Gunaratne P."/>
            <person name="Harris R.A."/>
            <person name="Hawes A.C."/>
            <person name="Hernandez J."/>
            <person name="Hodgson A.V."/>
            <person name="Hume J."/>
            <person name="Jackson A."/>
            <person name="Khan Z.M."/>
            <person name="Kovar-Smith C."/>
            <person name="Lewis L.R."/>
            <person name="Lozado R.J."/>
            <person name="Metzker M.L."/>
            <person name="Milosavljevic A."/>
            <person name="Miner G.R."/>
            <person name="Morgan M.B."/>
            <person name="Nazareth L.V."/>
            <person name="Scott G."/>
            <person name="Sodergren E."/>
            <person name="Song X.-Z."/>
            <person name="Steffen D."/>
            <person name="Wei S."/>
            <person name="Wheeler D.A."/>
            <person name="Wright M.W."/>
            <person name="Worley K.C."/>
            <person name="Yuan Y."/>
            <person name="Zhang Z."/>
            <person name="Adams C.Q."/>
            <person name="Ansari-Lari M.A."/>
            <person name="Ayele M."/>
            <person name="Brown M.J."/>
            <person name="Chen G."/>
            <person name="Chen Z."/>
            <person name="Clendenning J."/>
            <person name="Clerc-Blankenburg K.P."/>
            <person name="Chen R."/>
            <person name="Chen Z."/>
            <person name="Davis C."/>
            <person name="Delgado O."/>
            <person name="Dinh H.H."/>
            <person name="Dong W."/>
            <person name="Draper H."/>
            <person name="Ernst S."/>
            <person name="Fu G."/>
            <person name="Gonzalez-Garay M.L."/>
            <person name="Garcia D.K."/>
            <person name="Gillett W."/>
            <person name="Gu J."/>
            <person name="Hao B."/>
            <person name="Haugen E."/>
            <person name="Havlak P."/>
            <person name="He X."/>
            <person name="Hennig S."/>
            <person name="Hu S."/>
            <person name="Huang W."/>
            <person name="Jackson L.R."/>
            <person name="Jacob L.S."/>
            <person name="Kelly S.H."/>
            <person name="Kube M."/>
            <person name="Levy R."/>
            <person name="Li Z."/>
            <person name="Liu B."/>
            <person name="Liu J."/>
            <person name="Liu W."/>
            <person name="Lu J."/>
            <person name="Maheshwari M."/>
            <person name="Nguyen B.-V."/>
            <person name="Okwuonu G.O."/>
            <person name="Palmeiri A."/>
            <person name="Pasternak S."/>
            <person name="Perez L.M."/>
            <person name="Phelps K.A."/>
            <person name="Plopper F.J."/>
            <person name="Qiang B."/>
            <person name="Raymond C."/>
            <person name="Rodriguez R."/>
            <person name="Saenphimmachak C."/>
            <person name="Santibanez J."/>
            <person name="Shen H."/>
            <person name="Shen Y."/>
            <person name="Subramanian S."/>
            <person name="Tabor P.E."/>
            <person name="Verduzco D."/>
            <person name="Waldron L."/>
            <person name="Wang J."/>
            <person name="Wang J."/>
            <person name="Wang Q."/>
            <person name="Williams G.A."/>
            <person name="Wong G.K.-S."/>
            <person name="Yao Z."/>
            <person name="Zhang J."/>
            <person name="Zhang X."/>
            <person name="Zhao G."/>
            <person name="Zhou J."/>
            <person name="Zhou Y."/>
            <person name="Nelson D."/>
            <person name="Lehrach H."/>
            <person name="Reinhardt R."/>
            <person name="Naylor S.L."/>
            <person name="Yang H."/>
            <person name="Olson M."/>
            <person name="Weinstock G."/>
            <person name="Gibbs R.A."/>
        </authorList>
    </citation>
    <scope>NUCLEOTIDE SEQUENCE [LARGE SCALE GENOMIC DNA]</scope>
</reference>
<reference key="3">
    <citation type="submission" date="2005-09" db="EMBL/GenBank/DDBJ databases">
        <authorList>
            <person name="Mural R.J."/>
            <person name="Istrail S."/>
            <person name="Sutton G.G."/>
            <person name="Florea L."/>
            <person name="Halpern A.L."/>
            <person name="Mobarry C.M."/>
            <person name="Lippert R."/>
            <person name="Walenz B."/>
            <person name="Shatkay H."/>
            <person name="Dew I."/>
            <person name="Miller J.R."/>
            <person name="Flanigan M.J."/>
            <person name="Edwards N.J."/>
            <person name="Bolanos R."/>
            <person name="Fasulo D."/>
            <person name="Halldorsson B.V."/>
            <person name="Hannenhalli S."/>
            <person name="Turner R."/>
            <person name="Yooseph S."/>
            <person name="Lu F."/>
            <person name="Nusskern D.R."/>
            <person name="Shue B.C."/>
            <person name="Zheng X.H."/>
            <person name="Zhong F."/>
            <person name="Delcher A.L."/>
            <person name="Huson D.H."/>
            <person name="Kravitz S.A."/>
            <person name="Mouchard L."/>
            <person name="Reinert K."/>
            <person name="Remington K.A."/>
            <person name="Clark A.G."/>
            <person name="Waterman M.S."/>
            <person name="Eichler E.E."/>
            <person name="Adams M.D."/>
            <person name="Hunkapiller M.W."/>
            <person name="Myers E.W."/>
            <person name="Venter J.C."/>
        </authorList>
    </citation>
    <scope>NUCLEOTIDE SEQUENCE [LARGE SCALE GENOMIC DNA]</scope>
</reference>
<reference key="4">
    <citation type="journal article" date="2004" name="Genome Res.">
        <title>The status, quality, and expansion of the NIH full-length cDNA project: the Mammalian Gene Collection (MGC).</title>
        <authorList>
            <consortium name="The MGC Project Team"/>
        </authorList>
    </citation>
    <scope>NUCLEOTIDE SEQUENCE [LARGE SCALE MRNA] (ISOFORMS IQCJ-1 AND IQCJ-3)</scope>
</reference>
<dbReference type="EMBL" id="DQ309553">
    <property type="protein sequence ID" value="ABC26018.1"/>
    <property type="molecule type" value="mRNA"/>
</dbReference>
<dbReference type="EMBL" id="DQ309554">
    <property type="protein sequence ID" value="ABC26019.1"/>
    <property type="molecule type" value="mRNA"/>
</dbReference>
<dbReference type="EMBL" id="AC092997">
    <property type="status" value="NOT_ANNOTATED_CDS"/>
    <property type="molecule type" value="Genomic_DNA"/>
</dbReference>
<dbReference type="EMBL" id="AC092999">
    <property type="status" value="NOT_ANNOTATED_CDS"/>
    <property type="molecule type" value="Genomic_DNA"/>
</dbReference>
<dbReference type="EMBL" id="AC107312">
    <property type="status" value="NOT_ANNOTATED_CDS"/>
    <property type="molecule type" value="Genomic_DNA"/>
</dbReference>
<dbReference type="EMBL" id="CH471052">
    <property type="protein sequence ID" value="EAW78670.1"/>
    <property type="molecule type" value="Genomic_DNA"/>
</dbReference>
<dbReference type="EMBL" id="BC137464">
    <property type="protein sequence ID" value="AAI37465.1"/>
    <property type="molecule type" value="mRNA"/>
</dbReference>
<dbReference type="EMBL" id="BC137469">
    <property type="protein sequence ID" value="AAI37470.1"/>
    <property type="molecule type" value="mRNA"/>
</dbReference>
<dbReference type="EMBL" id="BC144658">
    <property type="protein sequence ID" value="AAI44659.1"/>
    <property type="molecule type" value="mRNA"/>
</dbReference>
<dbReference type="CCDS" id="CCDS46946.1">
    <molecule id="Q1A5X6-1"/>
</dbReference>
<dbReference type="CCDS" id="CCDS46947.1">
    <molecule id="Q1A5X6-2"/>
</dbReference>
<dbReference type="CCDS" id="CCDS56290.1">
    <molecule id="Q1A5X6-3"/>
</dbReference>
<dbReference type="RefSeq" id="NP_001036170.1">
    <molecule id="Q1A5X6-1"/>
    <property type="nucleotide sequence ID" value="NM_001042705.3"/>
</dbReference>
<dbReference type="RefSeq" id="NP_001036171.1">
    <molecule id="Q1A5X6-2"/>
    <property type="nucleotide sequence ID" value="NM_001042706.3"/>
</dbReference>
<dbReference type="RefSeq" id="NP_001184029.1">
    <molecule id="Q1A5X6-3"/>
    <property type="nucleotide sequence ID" value="NM_001197100.2"/>
</dbReference>
<dbReference type="BioGRID" id="576396">
    <property type="interactions" value="2"/>
</dbReference>
<dbReference type="STRING" id="9606.ENSP00000402153"/>
<dbReference type="iPTMnet" id="Q1A5X6"/>
<dbReference type="PhosphoSitePlus" id="Q1A5X6"/>
<dbReference type="BioMuta" id="IQCJ"/>
<dbReference type="DMDM" id="121940648"/>
<dbReference type="jPOST" id="Q1A5X6"/>
<dbReference type="MassIVE" id="Q1A5X6"/>
<dbReference type="PaxDb" id="9606-ENSP00000402153"/>
<dbReference type="PeptideAtlas" id="Q1A5X6"/>
<dbReference type="ProteomicsDB" id="61199">
    <molecule id="Q1A5X6-1"/>
</dbReference>
<dbReference type="ProteomicsDB" id="61200">
    <molecule id="Q1A5X6-2"/>
</dbReference>
<dbReference type="ProteomicsDB" id="61201">
    <molecule id="Q1A5X6-3"/>
</dbReference>
<dbReference type="Antibodypedia" id="54183">
    <property type="antibodies" value="139 antibodies from 19 providers"/>
</dbReference>
<dbReference type="DNASU" id="654502"/>
<dbReference type="Ensembl" id="ENST00000397832.7">
    <molecule id="Q1A5X6-2"/>
    <property type="protein sequence ID" value="ENSP00000380932.2"/>
    <property type="gene ID" value="ENSG00000214216.11"/>
</dbReference>
<dbReference type="Ensembl" id="ENST00000451172.5">
    <molecule id="Q1A5X6-1"/>
    <property type="protein sequence ID" value="ENSP00000402153.1"/>
    <property type="gene ID" value="ENSG00000214216.11"/>
</dbReference>
<dbReference type="Ensembl" id="ENST00000482126.1">
    <molecule id="Q1A5X6-3"/>
    <property type="protein sequence ID" value="ENSP00000418141.1"/>
    <property type="gene ID" value="ENSG00000214216.11"/>
</dbReference>
<dbReference type="GeneID" id="654502"/>
<dbReference type="KEGG" id="hsa:654502"/>
<dbReference type="MANE-Select" id="ENST00000397832.7">
    <molecule id="Q1A5X6-2"/>
    <property type="protein sequence ID" value="ENSP00000380932.2"/>
    <property type="RefSeq nucleotide sequence ID" value="NM_001042706.3"/>
    <property type="RefSeq protein sequence ID" value="NP_001036171.1"/>
</dbReference>
<dbReference type="UCSC" id="uc003fco.4">
    <molecule id="Q1A5X6-1"/>
    <property type="organism name" value="human"/>
</dbReference>
<dbReference type="AGR" id="HGNC:32406"/>
<dbReference type="CTD" id="654502"/>
<dbReference type="DisGeNET" id="654502"/>
<dbReference type="GeneCards" id="IQCJ"/>
<dbReference type="HGNC" id="HGNC:32406">
    <property type="gene designation" value="IQCJ"/>
</dbReference>
<dbReference type="HPA" id="ENSG00000214216">
    <property type="expression patterns" value="Not detected"/>
</dbReference>
<dbReference type="MIM" id="611622">
    <property type="type" value="gene"/>
</dbReference>
<dbReference type="neXtProt" id="NX_Q1A5X6"/>
<dbReference type="OpenTargets" id="ENSG00000214216"/>
<dbReference type="PharmGKB" id="PA143485504"/>
<dbReference type="VEuPathDB" id="HostDB:ENSG00000214216"/>
<dbReference type="eggNOG" id="ENOG502S3HE">
    <property type="taxonomic scope" value="Eukaryota"/>
</dbReference>
<dbReference type="GeneTree" id="ENSGT00390000000847"/>
<dbReference type="HOGENOM" id="CLU_150757_0_0_1"/>
<dbReference type="InParanoid" id="Q1A5X6"/>
<dbReference type="OMA" id="QANDGKY"/>
<dbReference type="OrthoDB" id="8932997at2759"/>
<dbReference type="PAN-GO" id="Q1A5X6">
    <property type="GO annotations" value="0 GO annotations based on evolutionary models"/>
</dbReference>
<dbReference type="PhylomeDB" id="Q1A5X6"/>
<dbReference type="TreeFam" id="TF336256"/>
<dbReference type="PathwayCommons" id="Q1A5X6"/>
<dbReference type="BioGRID-ORCS" id="654502">
    <property type="hits" value="6 hits in 1120 CRISPR screens"/>
</dbReference>
<dbReference type="GenomeRNAi" id="654502"/>
<dbReference type="Pharos" id="Q1A5X6">
    <property type="development level" value="Tdark"/>
</dbReference>
<dbReference type="PRO" id="PR:Q1A5X6"/>
<dbReference type="Proteomes" id="UP000005640">
    <property type="component" value="Chromosome 3"/>
</dbReference>
<dbReference type="RNAct" id="Q1A5X6">
    <property type="molecule type" value="protein"/>
</dbReference>
<dbReference type="Bgee" id="ENSG00000214216">
    <property type="expression patterns" value="Expressed in male germ line stem cell (sensu Vertebrata) in testis and 38 other cell types or tissues"/>
</dbReference>
<dbReference type="InterPro" id="IPR053113">
    <property type="entry name" value="IQ_domain_protein"/>
</dbReference>
<dbReference type="InterPro" id="IPR029362">
    <property type="entry name" value="IQCJ-SCHIP1_N"/>
</dbReference>
<dbReference type="PANTHER" id="PTHR35976">
    <property type="entry name" value="IQ DOMAIN-CONTAINING PROTEIN J"/>
    <property type="match status" value="1"/>
</dbReference>
<dbReference type="PANTHER" id="PTHR35976:SF1">
    <property type="entry name" value="IQ DOMAIN-CONTAINING PROTEIN J"/>
    <property type="match status" value="1"/>
</dbReference>
<dbReference type="Pfam" id="PF15157">
    <property type="entry name" value="IQCJ-SCHIP1"/>
    <property type="match status" value="1"/>
</dbReference>
<sequence>MRLEELKRLQNPLEQVNDGKYSFENHQLAMDAENNIEKYPLNLQPLESKVKIIQRAWREYLQRQEPLGKRSPSPPSVSSEKLSSSVSMNTFSDSSTPFARAPVGKIHPYISWRLQSPGDKLPGGRKVILLYLDQLARPTGFIHTLKEPQIERLGFLTLQ</sequence>
<proteinExistence type="evidence at transcript level"/>
<accession>Q1A5X6</accession>
<accession>B7ZMM2</accession>
<accession>B9EH97</accession>
<accession>Q1A5X5</accession>
<protein>
    <recommendedName>
        <fullName evidence="4">IQ domain-containing protein J</fullName>
    </recommendedName>
</protein>
<organism>
    <name type="scientific">Homo sapiens</name>
    <name type="common">Human</name>
    <dbReference type="NCBI Taxonomy" id="9606"/>
    <lineage>
        <taxon>Eukaryota</taxon>
        <taxon>Metazoa</taxon>
        <taxon>Chordata</taxon>
        <taxon>Craniata</taxon>
        <taxon>Vertebrata</taxon>
        <taxon>Euteleostomi</taxon>
        <taxon>Mammalia</taxon>
        <taxon>Eutheria</taxon>
        <taxon>Euarchontoglires</taxon>
        <taxon>Primates</taxon>
        <taxon>Haplorrhini</taxon>
        <taxon>Catarrhini</taxon>
        <taxon>Hominidae</taxon>
        <taxon>Homo</taxon>
    </lineage>
</organism>
<feature type="chain" id="PRO_0000315661" description="IQ domain-containing protein J">
    <location>
        <begin position="1"/>
        <end position="159"/>
    </location>
</feature>
<feature type="domain" description="IQ" evidence="5">
    <location>
        <begin position="47"/>
        <end position="67"/>
    </location>
</feature>
<feature type="region of interest" description="Disordered" evidence="1">
    <location>
        <begin position="63"/>
        <end position="88"/>
    </location>
</feature>
<feature type="compositionally biased region" description="Low complexity" evidence="1">
    <location>
        <begin position="76"/>
        <end position="87"/>
    </location>
</feature>
<feature type="splice variant" id="VSP_043259" description="In isoform IQCJ-3." evidence="2">
    <location>
        <begin position="26"/>
        <end position="52"/>
    </location>
</feature>
<feature type="splice variant" id="VSP_030597" description="In isoform IQCJ-2." evidence="3">
    <original>FARAPVGKIHPYISWRLQSPGDKLPGGRKVILLYLDQLARPTGFIHTLKEPQIERLGFLTLQ</original>
    <variation>VSVMFLFLCPDLTFN</variation>
    <location>
        <begin position="98"/>
        <end position="159"/>
    </location>
</feature>
<evidence type="ECO:0000256" key="1">
    <source>
        <dbReference type="SAM" id="MobiDB-lite"/>
    </source>
</evidence>
<evidence type="ECO:0000303" key="2">
    <source>
    </source>
</evidence>
<evidence type="ECO:0000303" key="3">
    <source>
    </source>
</evidence>
<evidence type="ECO:0000305" key="4"/>
<evidence type="ECO:0000305" key="5">
    <source>
    </source>
</evidence>
<evidence type="ECO:0000312" key="6">
    <source>
        <dbReference type="HGNC" id="HGNC:32406"/>
    </source>
</evidence>
<name>IQCJ_HUMAN</name>